<organism>
    <name type="scientific">Nocardioides sp. (strain ATCC BAA-499 / JS614)</name>
    <dbReference type="NCBI Taxonomy" id="196162"/>
    <lineage>
        <taxon>Bacteria</taxon>
        <taxon>Bacillati</taxon>
        <taxon>Actinomycetota</taxon>
        <taxon>Actinomycetes</taxon>
        <taxon>Propionibacteriales</taxon>
        <taxon>Nocardioidaceae</taxon>
        <taxon>Nocardioides</taxon>
    </lineage>
</organism>
<evidence type="ECO:0000255" key="1">
    <source>
        <dbReference type="HAMAP-Rule" id="MF_01307"/>
    </source>
</evidence>
<evidence type="ECO:0000256" key="2">
    <source>
        <dbReference type="SAM" id="MobiDB-lite"/>
    </source>
</evidence>
<evidence type="ECO:0000305" key="3"/>
<accession>A1SNK1</accession>
<proteinExistence type="inferred from homology"/>
<reference key="1">
    <citation type="submission" date="2006-12" db="EMBL/GenBank/DDBJ databases">
        <title>Complete sequence of chromosome 1 of Nocardioides sp. JS614.</title>
        <authorList>
            <person name="Copeland A."/>
            <person name="Lucas S."/>
            <person name="Lapidus A."/>
            <person name="Barry K."/>
            <person name="Detter J.C."/>
            <person name="Glavina del Rio T."/>
            <person name="Hammon N."/>
            <person name="Israni S."/>
            <person name="Dalin E."/>
            <person name="Tice H."/>
            <person name="Pitluck S."/>
            <person name="Thompson L.S."/>
            <person name="Brettin T."/>
            <person name="Bruce D."/>
            <person name="Han C."/>
            <person name="Tapia R."/>
            <person name="Schmutz J."/>
            <person name="Larimer F."/>
            <person name="Land M."/>
            <person name="Hauser L."/>
            <person name="Kyrpides N."/>
            <person name="Kim E."/>
            <person name="Mattes T."/>
            <person name="Gossett J."/>
            <person name="Richardson P."/>
        </authorList>
    </citation>
    <scope>NUCLEOTIDE SEQUENCE [LARGE SCALE GENOMIC DNA]</scope>
    <source>
        <strain>ATCC BAA-499 / JS614</strain>
    </source>
</reference>
<keyword id="KW-1185">Reference proteome</keyword>
<keyword id="KW-0687">Ribonucleoprotein</keyword>
<keyword id="KW-0689">Ribosomal protein</keyword>
<keyword id="KW-0694">RNA-binding</keyword>
<keyword id="KW-0699">rRNA-binding</keyword>
<name>RS5_NOCSJ</name>
<protein>
    <recommendedName>
        <fullName evidence="1">Small ribosomal subunit protein uS5</fullName>
    </recommendedName>
    <alternativeName>
        <fullName evidence="3">30S ribosomal protein S5</fullName>
    </alternativeName>
</protein>
<dbReference type="EMBL" id="CP000509">
    <property type="protein sequence ID" value="ABL83386.1"/>
    <property type="molecule type" value="Genomic_DNA"/>
</dbReference>
<dbReference type="RefSeq" id="WP_011757317.1">
    <property type="nucleotide sequence ID" value="NC_008699.1"/>
</dbReference>
<dbReference type="SMR" id="A1SNK1"/>
<dbReference type="STRING" id="196162.Noca_3888"/>
<dbReference type="KEGG" id="nca:Noca_3888"/>
<dbReference type="eggNOG" id="COG0098">
    <property type="taxonomic scope" value="Bacteria"/>
</dbReference>
<dbReference type="HOGENOM" id="CLU_065898_1_0_11"/>
<dbReference type="OrthoDB" id="9809045at2"/>
<dbReference type="Proteomes" id="UP000000640">
    <property type="component" value="Chromosome"/>
</dbReference>
<dbReference type="GO" id="GO:0015935">
    <property type="term" value="C:small ribosomal subunit"/>
    <property type="evidence" value="ECO:0007669"/>
    <property type="project" value="InterPro"/>
</dbReference>
<dbReference type="GO" id="GO:0019843">
    <property type="term" value="F:rRNA binding"/>
    <property type="evidence" value="ECO:0007669"/>
    <property type="project" value="UniProtKB-UniRule"/>
</dbReference>
<dbReference type="GO" id="GO:0003735">
    <property type="term" value="F:structural constituent of ribosome"/>
    <property type="evidence" value="ECO:0007669"/>
    <property type="project" value="InterPro"/>
</dbReference>
<dbReference type="GO" id="GO:0006412">
    <property type="term" value="P:translation"/>
    <property type="evidence" value="ECO:0007669"/>
    <property type="project" value="UniProtKB-UniRule"/>
</dbReference>
<dbReference type="FunFam" id="3.30.160.20:FF:000001">
    <property type="entry name" value="30S ribosomal protein S5"/>
    <property type="match status" value="1"/>
</dbReference>
<dbReference type="FunFam" id="3.30.230.10:FF:000002">
    <property type="entry name" value="30S ribosomal protein S5"/>
    <property type="match status" value="1"/>
</dbReference>
<dbReference type="Gene3D" id="3.30.160.20">
    <property type="match status" value="1"/>
</dbReference>
<dbReference type="Gene3D" id="3.30.230.10">
    <property type="match status" value="1"/>
</dbReference>
<dbReference type="HAMAP" id="MF_01307_B">
    <property type="entry name" value="Ribosomal_uS5_B"/>
    <property type="match status" value="1"/>
</dbReference>
<dbReference type="InterPro" id="IPR020568">
    <property type="entry name" value="Ribosomal_Su5_D2-typ_SF"/>
</dbReference>
<dbReference type="InterPro" id="IPR000851">
    <property type="entry name" value="Ribosomal_uS5"/>
</dbReference>
<dbReference type="InterPro" id="IPR005712">
    <property type="entry name" value="Ribosomal_uS5_bac-type"/>
</dbReference>
<dbReference type="InterPro" id="IPR005324">
    <property type="entry name" value="Ribosomal_uS5_C"/>
</dbReference>
<dbReference type="InterPro" id="IPR013810">
    <property type="entry name" value="Ribosomal_uS5_N"/>
</dbReference>
<dbReference type="InterPro" id="IPR018192">
    <property type="entry name" value="Ribosomal_uS5_N_CS"/>
</dbReference>
<dbReference type="InterPro" id="IPR014721">
    <property type="entry name" value="Ribsml_uS5_D2-typ_fold_subgr"/>
</dbReference>
<dbReference type="NCBIfam" id="TIGR01021">
    <property type="entry name" value="rpsE_bact"/>
    <property type="match status" value="1"/>
</dbReference>
<dbReference type="PANTHER" id="PTHR48277">
    <property type="entry name" value="MITOCHONDRIAL RIBOSOMAL PROTEIN S5"/>
    <property type="match status" value="1"/>
</dbReference>
<dbReference type="PANTHER" id="PTHR48277:SF1">
    <property type="entry name" value="MITOCHONDRIAL RIBOSOMAL PROTEIN S5"/>
    <property type="match status" value="1"/>
</dbReference>
<dbReference type="Pfam" id="PF00333">
    <property type="entry name" value="Ribosomal_S5"/>
    <property type="match status" value="1"/>
</dbReference>
<dbReference type="Pfam" id="PF03719">
    <property type="entry name" value="Ribosomal_S5_C"/>
    <property type="match status" value="1"/>
</dbReference>
<dbReference type="SUPFAM" id="SSF54768">
    <property type="entry name" value="dsRNA-binding domain-like"/>
    <property type="match status" value="1"/>
</dbReference>
<dbReference type="SUPFAM" id="SSF54211">
    <property type="entry name" value="Ribosomal protein S5 domain 2-like"/>
    <property type="match status" value="1"/>
</dbReference>
<dbReference type="PROSITE" id="PS00585">
    <property type="entry name" value="RIBOSOMAL_S5"/>
    <property type="match status" value="1"/>
</dbReference>
<dbReference type="PROSITE" id="PS50881">
    <property type="entry name" value="S5_DSRBD"/>
    <property type="match status" value="1"/>
</dbReference>
<comment type="function">
    <text evidence="1">With S4 and S12 plays an important role in translational accuracy.</text>
</comment>
<comment type="function">
    <text evidence="1">Located at the back of the 30S subunit body where it stabilizes the conformation of the head with respect to the body.</text>
</comment>
<comment type="subunit">
    <text evidence="1">Part of the 30S ribosomal subunit. Contacts proteins S4 and S8.</text>
</comment>
<comment type="domain">
    <text>The N-terminal domain interacts with the head of the 30S subunit; the C-terminal domain interacts with the body and contacts protein S4. The interaction surface between S4 and S5 is involved in control of translational fidelity.</text>
</comment>
<comment type="similarity">
    <text evidence="1">Belongs to the universal ribosomal protein uS5 family.</text>
</comment>
<gene>
    <name evidence="1" type="primary">rpsE</name>
    <name type="ordered locus">Noca_3888</name>
</gene>
<sequence>MSGAQRGQRGGERRGGRDDRRGQGADKTAYIERVVAINRVAKVVKGGRRFSFTALVVVGDGEGLVGVGYGKAKEVPAAIAKGVEEAKKHFFRVPRIQGTIPHPVQGEKAAGVVLLRPAAPGTGVIAGGPVRAVLECAGIHDVLSKSLGSSNQINIVHATVEALRMLEQPEAVAARRGLPVEEVAPAALLKARVEVPAGVSEEVSS</sequence>
<feature type="chain" id="PRO_0000323162" description="Small ribosomal subunit protein uS5">
    <location>
        <begin position="1"/>
        <end position="205"/>
    </location>
</feature>
<feature type="domain" description="S5 DRBM" evidence="1">
    <location>
        <begin position="30"/>
        <end position="93"/>
    </location>
</feature>
<feature type="region of interest" description="Disordered" evidence="2">
    <location>
        <begin position="1"/>
        <end position="25"/>
    </location>
</feature>
<feature type="compositionally biased region" description="Basic and acidic residues" evidence="2">
    <location>
        <begin position="9"/>
        <end position="24"/>
    </location>
</feature>